<proteinExistence type="inferred from homology"/>
<gene>
    <name evidence="1" type="primary">psiE</name>
    <name type="ordered locus">lin0828</name>
</gene>
<comment type="subcellular location">
    <subcellularLocation>
        <location evidence="1">Cell membrane</location>
        <topology evidence="1">Multi-pass membrane protein</topology>
    </subcellularLocation>
</comment>
<comment type="similarity">
    <text evidence="1">Belongs to the PsiE family.</text>
</comment>
<keyword id="KW-1003">Cell membrane</keyword>
<keyword id="KW-0472">Membrane</keyword>
<keyword id="KW-0812">Transmembrane</keyword>
<keyword id="KW-1133">Transmembrane helix</keyword>
<organism>
    <name type="scientific">Listeria innocua serovar 6a (strain ATCC BAA-680 / CLIP 11262)</name>
    <dbReference type="NCBI Taxonomy" id="272626"/>
    <lineage>
        <taxon>Bacteria</taxon>
        <taxon>Bacillati</taxon>
        <taxon>Bacillota</taxon>
        <taxon>Bacilli</taxon>
        <taxon>Bacillales</taxon>
        <taxon>Listeriaceae</taxon>
        <taxon>Listeria</taxon>
    </lineage>
</organism>
<feature type="chain" id="PRO_0000160288" description="Protein PsiE homolog">
    <location>
        <begin position="1"/>
        <end position="137"/>
    </location>
</feature>
<feature type="transmembrane region" description="Helical" evidence="1">
    <location>
        <begin position="15"/>
        <end position="35"/>
    </location>
</feature>
<feature type="transmembrane region" description="Helical" evidence="1">
    <location>
        <begin position="55"/>
        <end position="75"/>
    </location>
</feature>
<feature type="transmembrane region" description="Helical" evidence="1">
    <location>
        <begin position="82"/>
        <end position="102"/>
    </location>
</feature>
<feature type="transmembrane region" description="Helical" evidence="1">
    <location>
        <begin position="108"/>
        <end position="128"/>
    </location>
</feature>
<evidence type="ECO:0000255" key="1">
    <source>
        <dbReference type="HAMAP-Rule" id="MF_01048"/>
    </source>
</evidence>
<name>PSIE_LISIN</name>
<protein>
    <recommendedName>
        <fullName evidence="1">Protein PsiE homolog</fullName>
    </recommendedName>
</protein>
<dbReference type="EMBL" id="AL596166">
    <property type="protein sequence ID" value="CAC96060.1"/>
    <property type="molecule type" value="Genomic_DNA"/>
</dbReference>
<dbReference type="PIR" id="AD1536">
    <property type="entry name" value="AD1536"/>
</dbReference>
<dbReference type="RefSeq" id="WP_003729465.1">
    <property type="nucleotide sequence ID" value="NC_003212.1"/>
</dbReference>
<dbReference type="SMR" id="Q92DI5"/>
<dbReference type="STRING" id="272626.gene:17565155"/>
<dbReference type="GeneID" id="93234270"/>
<dbReference type="KEGG" id="lin:lin0828"/>
<dbReference type="eggNOG" id="COG3223">
    <property type="taxonomic scope" value="Bacteria"/>
</dbReference>
<dbReference type="HOGENOM" id="CLU_127561_0_0_9"/>
<dbReference type="OrthoDB" id="9792470at2"/>
<dbReference type="Proteomes" id="UP000002513">
    <property type="component" value="Chromosome"/>
</dbReference>
<dbReference type="GO" id="GO:0005886">
    <property type="term" value="C:plasma membrane"/>
    <property type="evidence" value="ECO:0007669"/>
    <property type="project" value="UniProtKB-SubCell"/>
</dbReference>
<dbReference type="GO" id="GO:0016036">
    <property type="term" value="P:cellular response to phosphate starvation"/>
    <property type="evidence" value="ECO:0007669"/>
    <property type="project" value="InterPro"/>
</dbReference>
<dbReference type="HAMAP" id="MF_01048">
    <property type="entry name" value="PsiE"/>
    <property type="match status" value="1"/>
</dbReference>
<dbReference type="InterPro" id="IPR009315">
    <property type="entry name" value="P_starv_induced_PsiE"/>
</dbReference>
<dbReference type="InterPro" id="IPR020948">
    <property type="entry name" value="P_starv_induced_PsiE-like"/>
</dbReference>
<dbReference type="NCBIfam" id="NF002765">
    <property type="entry name" value="PRK02833.1-3"/>
    <property type="match status" value="1"/>
</dbReference>
<dbReference type="NCBIfam" id="NF002766">
    <property type="entry name" value="PRK02833.1-4"/>
    <property type="match status" value="1"/>
</dbReference>
<dbReference type="PANTHER" id="PTHR37819">
    <property type="entry name" value="PROTEIN PSIE"/>
    <property type="match status" value="1"/>
</dbReference>
<dbReference type="PANTHER" id="PTHR37819:SF1">
    <property type="entry name" value="PROTEIN PSIE"/>
    <property type="match status" value="1"/>
</dbReference>
<dbReference type="Pfam" id="PF06146">
    <property type="entry name" value="PsiE"/>
    <property type="match status" value="1"/>
</dbReference>
<dbReference type="PIRSF" id="PIRSF029598">
    <property type="entry name" value="PsiE"/>
    <property type="match status" value="1"/>
</dbReference>
<reference key="1">
    <citation type="journal article" date="2001" name="Science">
        <title>Comparative genomics of Listeria species.</title>
        <authorList>
            <person name="Glaser P."/>
            <person name="Frangeul L."/>
            <person name="Buchrieser C."/>
            <person name="Rusniok C."/>
            <person name="Amend A."/>
            <person name="Baquero F."/>
            <person name="Berche P."/>
            <person name="Bloecker H."/>
            <person name="Brandt P."/>
            <person name="Chakraborty T."/>
            <person name="Charbit A."/>
            <person name="Chetouani F."/>
            <person name="Couve E."/>
            <person name="de Daruvar A."/>
            <person name="Dehoux P."/>
            <person name="Domann E."/>
            <person name="Dominguez-Bernal G."/>
            <person name="Duchaud E."/>
            <person name="Durant L."/>
            <person name="Dussurget O."/>
            <person name="Entian K.-D."/>
            <person name="Fsihi H."/>
            <person name="Garcia-del Portillo F."/>
            <person name="Garrido P."/>
            <person name="Gautier L."/>
            <person name="Goebel W."/>
            <person name="Gomez-Lopez N."/>
            <person name="Hain T."/>
            <person name="Hauf J."/>
            <person name="Jackson D."/>
            <person name="Jones L.-M."/>
            <person name="Kaerst U."/>
            <person name="Kreft J."/>
            <person name="Kuhn M."/>
            <person name="Kunst F."/>
            <person name="Kurapkat G."/>
            <person name="Madueno E."/>
            <person name="Maitournam A."/>
            <person name="Mata Vicente J."/>
            <person name="Ng E."/>
            <person name="Nedjari H."/>
            <person name="Nordsiek G."/>
            <person name="Novella S."/>
            <person name="de Pablos B."/>
            <person name="Perez-Diaz J.-C."/>
            <person name="Purcell R."/>
            <person name="Remmel B."/>
            <person name="Rose M."/>
            <person name="Schlueter T."/>
            <person name="Simoes N."/>
            <person name="Tierrez A."/>
            <person name="Vazquez-Boland J.-A."/>
            <person name="Voss H."/>
            <person name="Wehland J."/>
            <person name="Cossart P."/>
        </authorList>
    </citation>
    <scope>NUCLEOTIDE SEQUENCE [LARGE SCALE GENOMIC DNA]</scope>
    <source>
        <strain>ATCC BAA-680 / CLIP 11262</strain>
    </source>
</reference>
<accession>Q92DI5</accession>
<sequence>MKRLEKISSIVPILLRITLNLALIMVGFTLVAFLIREAFTIFNNIFFLDTDVSYYYMTQDILTFFLYFEFIALIVKYFESHFHFPLRYFIYIGITAIIRFIIVDHSSATSTLILSGAILLLVAALFLANTKLLKREG</sequence>